<dbReference type="EMBL" id="AE016827">
    <property type="protein sequence ID" value="AAU36817.1"/>
    <property type="molecule type" value="Genomic_DNA"/>
</dbReference>
<dbReference type="SMR" id="Q65W43"/>
<dbReference type="STRING" id="221988.MS0210"/>
<dbReference type="KEGG" id="msu:MS0210"/>
<dbReference type="eggNOG" id="COG0222">
    <property type="taxonomic scope" value="Bacteria"/>
</dbReference>
<dbReference type="HOGENOM" id="CLU_086499_3_2_6"/>
<dbReference type="Proteomes" id="UP000000607">
    <property type="component" value="Chromosome"/>
</dbReference>
<dbReference type="GO" id="GO:0022625">
    <property type="term" value="C:cytosolic large ribosomal subunit"/>
    <property type="evidence" value="ECO:0007669"/>
    <property type="project" value="TreeGrafter"/>
</dbReference>
<dbReference type="GO" id="GO:0003729">
    <property type="term" value="F:mRNA binding"/>
    <property type="evidence" value="ECO:0007669"/>
    <property type="project" value="TreeGrafter"/>
</dbReference>
<dbReference type="GO" id="GO:0003735">
    <property type="term" value="F:structural constituent of ribosome"/>
    <property type="evidence" value="ECO:0007669"/>
    <property type="project" value="InterPro"/>
</dbReference>
<dbReference type="GO" id="GO:0006412">
    <property type="term" value="P:translation"/>
    <property type="evidence" value="ECO:0007669"/>
    <property type="project" value="UniProtKB-UniRule"/>
</dbReference>
<dbReference type="CDD" id="cd00387">
    <property type="entry name" value="Ribosomal_L7_L12"/>
    <property type="match status" value="1"/>
</dbReference>
<dbReference type="FunFam" id="1.20.5.710:FF:000003">
    <property type="entry name" value="50S ribosomal protein L7/L12"/>
    <property type="match status" value="1"/>
</dbReference>
<dbReference type="FunFam" id="3.30.1390.10:FF:000001">
    <property type="entry name" value="50S ribosomal protein L7/L12"/>
    <property type="match status" value="1"/>
</dbReference>
<dbReference type="Gene3D" id="3.30.1390.10">
    <property type="match status" value="1"/>
</dbReference>
<dbReference type="Gene3D" id="1.20.5.710">
    <property type="entry name" value="Single helix bin"/>
    <property type="match status" value="1"/>
</dbReference>
<dbReference type="HAMAP" id="MF_00368">
    <property type="entry name" value="Ribosomal_bL12"/>
    <property type="match status" value="1"/>
</dbReference>
<dbReference type="InterPro" id="IPR000206">
    <property type="entry name" value="Ribosomal_bL12"/>
</dbReference>
<dbReference type="InterPro" id="IPR013823">
    <property type="entry name" value="Ribosomal_bL12_C"/>
</dbReference>
<dbReference type="InterPro" id="IPR014719">
    <property type="entry name" value="Ribosomal_bL12_C/ClpS-like"/>
</dbReference>
<dbReference type="InterPro" id="IPR008932">
    <property type="entry name" value="Ribosomal_bL12_oligo"/>
</dbReference>
<dbReference type="InterPro" id="IPR036235">
    <property type="entry name" value="Ribosomal_bL12_oligo_N_sf"/>
</dbReference>
<dbReference type="NCBIfam" id="TIGR00855">
    <property type="entry name" value="L12"/>
    <property type="match status" value="1"/>
</dbReference>
<dbReference type="PANTHER" id="PTHR45987">
    <property type="entry name" value="39S RIBOSOMAL PROTEIN L12"/>
    <property type="match status" value="1"/>
</dbReference>
<dbReference type="PANTHER" id="PTHR45987:SF4">
    <property type="entry name" value="LARGE RIBOSOMAL SUBUNIT PROTEIN BL12M"/>
    <property type="match status" value="1"/>
</dbReference>
<dbReference type="Pfam" id="PF00542">
    <property type="entry name" value="Ribosomal_L12"/>
    <property type="match status" value="1"/>
</dbReference>
<dbReference type="Pfam" id="PF16320">
    <property type="entry name" value="Ribosomal_L12_N"/>
    <property type="match status" value="1"/>
</dbReference>
<dbReference type="SUPFAM" id="SSF54736">
    <property type="entry name" value="ClpS-like"/>
    <property type="match status" value="1"/>
</dbReference>
<dbReference type="SUPFAM" id="SSF48300">
    <property type="entry name" value="Ribosomal protein L7/12, oligomerisation (N-terminal) domain"/>
    <property type="match status" value="1"/>
</dbReference>
<organism>
    <name type="scientific">Mannheimia succiniciproducens (strain KCTC 0769BP / MBEL55E)</name>
    <dbReference type="NCBI Taxonomy" id="221988"/>
    <lineage>
        <taxon>Bacteria</taxon>
        <taxon>Pseudomonadati</taxon>
        <taxon>Pseudomonadota</taxon>
        <taxon>Gammaproteobacteria</taxon>
        <taxon>Pasteurellales</taxon>
        <taxon>Pasteurellaceae</taxon>
        <taxon>Basfia</taxon>
    </lineage>
</organism>
<reference key="1">
    <citation type="journal article" date="2004" name="Nat. Biotechnol.">
        <title>The genome sequence of the capnophilic rumen bacterium Mannheimia succiniciproducens.</title>
        <authorList>
            <person name="Hong S.H."/>
            <person name="Kim J.S."/>
            <person name="Lee S.Y."/>
            <person name="In Y.H."/>
            <person name="Choi S.S."/>
            <person name="Rih J.-K."/>
            <person name="Kim C.H."/>
            <person name="Jeong H."/>
            <person name="Hur C.G."/>
            <person name="Kim J.J."/>
        </authorList>
    </citation>
    <scope>NUCLEOTIDE SEQUENCE [LARGE SCALE GENOMIC DNA]</scope>
    <source>
        <strain>KCTC 0769BP / MBEL55E</strain>
    </source>
</reference>
<comment type="function">
    <text evidence="1">Forms part of the ribosomal stalk which helps the ribosome interact with GTP-bound translation factors. Is thus essential for accurate translation.</text>
</comment>
<comment type="subunit">
    <text evidence="1">Homodimer. Part of the ribosomal stalk of the 50S ribosomal subunit. Forms a multimeric L10(L12)X complex, where L10 forms an elongated spine to which 2 to 4 L12 dimers bind in a sequential fashion. Binds GTP-bound translation factors.</text>
</comment>
<comment type="similarity">
    <text evidence="1">Belongs to the bacterial ribosomal protein bL12 family.</text>
</comment>
<evidence type="ECO:0000255" key="1">
    <source>
        <dbReference type="HAMAP-Rule" id="MF_00368"/>
    </source>
</evidence>
<evidence type="ECO:0000305" key="2"/>
<keyword id="KW-0687">Ribonucleoprotein</keyword>
<keyword id="KW-0689">Ribosomal protein</keyword>
<sequence>MIVMSLTNEQIIEAIASKSVSEIVELISAMEEKFGVSAAAVAAAAPAAGAAAAEEKTEFDVVLKAAGANKVAVIKAVRGATGLGLKEAKDLVESAPANLKEGVSKEEAESLKKELEAAGAEVEIK</sequence>
<protein>
    <recommendedName>
        <fullName evidence="1">Large ribosomal subunit protein bL12</fullName>
    </recommendedName>
    <alternativeName>
        <fullName evidence="2">50S ribosomal protein L7/L12</fullName>
    </alternativeName>
</protein>
<proteinExistence type="inferred from homology"/>
<feature type="chain" id="PRO_0000243444" description="Large ribosomal subunit protein bL12">
    <location>
        <begin position="1"/>
        <end position="125"/>
    </location>
</feature>
<accession>Q65W43</accession>
<gene>
    <name evidence="1" type="primary">rplL</name>
    <name type="ordered locus">MS0210</name>
</gene>
<name>RL7_MANSM</name>